<organism>
    <name type="scientific">Xenopus laevis</name>
    <name type="common">African clawed frog</name>
    <dbReference type="NCBI Taxonomy" id="8355"/>
    <lineage>
        <taxon>Eukaryota</taxon>
        <taxon>Metazoa</taxon>
        <taxon>Chordata</taxon>
        <taxon>Craniata</taxon>
        <taxon>Vertebrata</taxon>
        <taxon>Euteleostomi</taxon>
        <taxon>Amphibia</taxon>
        <taxon>Batrachia</taxon>
        <taxon>Anura</taxon>
        <taxon>Pipoidea</taxon>
        <taxon>Pipidae</taxon>
        <taxon>Xenopodinae</taxon>
        <taxon>Xenopus</taxon>
        <taxon>Xenopus</taxon>
    </lineage>
</organism>
<comment type="function">
    <text evidence="1">Inhibits amyloid precursor protein processing, probably by blocking BACE1 activity.</text>
</comment>
<comment type="subcellular location">
    <subcellularLocation>
        <location evidence="4">Endoplasmic reticulum membrane</location>
        <topology evidence="2">Multi-pass membrane protein</topology>
    </subcellularLocation>
    <subcellularLocation>
        <location evidence="4">Nucleus</location>
    </subcellularLocation>
    <text evidence="4">Mainly localized to the endoplasmic reticulum with some expression in the nucleus and polysome fractions.</text>
</comment>
<comment type="tissue specificity">
    <text evidence="4">Expressed in the animal hemisphere (presumptive neural ectoderm) of blastula and gastrula stage embryos, and along the anterior neural border, in the panplacodal primordium, and in the dorsolateral side of archenteron roof of late neurula embryos. At the tailbud stage, expression localizes to the central nervous system, including the spinal cord, prosencephalon, mesencephalon and rhombencephalon, as well as the lateral line placode, otic vesicle and pronephros.</text>
</comment>
<comment type="developmental stage">
    <text evidence="4">Expressed both maternally and zygotically.</text>
</comment>
<comment type="miscellaneous">
    <text evidence="4">This sequence corresponds to isoform C of rtn1-B.</text>
</comment>
<proteinExistence type="evidence at transcript level"/>
<sequence>MQASADSTRMECLWSNWKCQAIDLLYWRDIKQTGIVFGSVLLMLFSLIQFSVVSVMAYLALAALSATISFRIYKSVLQAVQKTDEGHPFKSYLDMEISLSQEQIQKYTDCLQVYTNSIAKELRRLFLVQDLVDSLKFAVLMWLLTYVGALFNGLTLLIMAVVSMFSLPVVYDKYQAQIDQYLGLVRTNMNTIMTKIQAKIPGTKQKE</sequence>
<feature type="chain" id="PRO_0000315932" description="Reticulon-1-A">
    <location>
        <begin position="1"/>
        <end position="207"/>
    </location>
</feature>
<feature type="transmembrane region" description="Helical" evidence="2">
    <location>
        <begin position="35"/>
        <end position="55"/>
    </location>
</feature>
<feature type="transmembrane region" description="Helical" evidence="2">
    <location>
        <begin position="139"/>
        <end position="159"/>
    </location>
</feature>
<feature type="domain" description="Reticulon" evidence="3">
    <location>
        <begin position="21"/>
        <end position="207"/>
    </location>
</feature>
<reference evidence="5 6" key="1">
    <citation type="journal article" date="2007" name="Dev. Dyn.">
        <title>Identification and expression of XRTN1-A and XRTN1-C in Xenopus laevis.</title>
        <authorList>
            <person name="Park E.C."/>
            <person name="Shim S."/>
            <person name="Han J.-K."/>
        </authorList>
    </citation>
    <scope>NUCLEOTIDE SEQUENCE [MRNA]</scope>
    <scope>SUBCELLULAR LOCATION</scope>
    <scope>TISSUE SPECIFICITY</scope>
    <scope>DEVELOPMENTAL STAGE</scope>
    <source>
        <tissue evidence="4">Head</tissue>
    </source>
</reference>
<reference evidence="5" key="2">
    <citation type="submission" date="2003-06" db="EMBL/GenBank/DDBJ databases">
        <authorList>
            <consortium name="NIH - Xenopus Gene Collection (XGC) project"/>
        </authorList>
    </citation>
    <scope>NUCLEOTIDE SEQUENCE [LARGE SCALE MRNA]</scope>
    <source>
        <tissue>Eye</tissue>
    </source>
</reference>
<reference evidence="5 7" key="3">
    <citation type="journal article" date="2003" name="FASEB J.">
        <title>A reticular rhapsody: phylogenic evolution and nomenclature of the RTN/Nogo gene family.</title>
        <authorList>
            <person name="Oertle T."/>
            <person name="Klinger M."/>
            <person name="Stuermer C.A.O."/>
            <person name="Schwab M.E."/>
        </authorList>
    </citation>
    <scope>IDENTIFICATION</scope>
</reference>
<accession>Q6IFY7</accession>
<protein>
    <recommendedName>
        <fullName>Reticulon-1-A</fullName>
    </recommendedName>
    <alternativeName>
        <fullName>RTN1.1</fullName>
        <shortName>xRTN1</shortName>
    </alternativeName>
    <alternativeName>
        <fullName>XRTN1-C.1</fullName>
    </alternativeName>
</protein>
<dbReference type="EMBL" id="AY182251">
    <property type="protein sequence ID" value="AAO60242.1"/>
    <property type="molecule type" value="mRNA"/>
</dbReference>
<dbReference type="EMBL" id="CD360654">
    <property type="status" value="NOT_ANNOTATED_CDS"/>
    <property type="molecule type" value="mRNA"/>
</dbReference>
<dbReference type="EMBL" id="BK004007">
    <property type="protein sequence ID" value="DAA02070.1"/>
    <property type="molecule type" value="mRNA"/>
</dbReference>
<dbReference type="RefSeq" id="NP_001089006.1">
    <property type="nucleotide sequence ID" value="NM_001095537.1"/>
</dbReference>
<dbReference type="SMR" id="Q6IFY7"/>
<dbReference type="GeneID" id="496390"/>
<dbReference type="KEGG" id="xla:496390"/>
<dbReference type="AGR" id="Xenbase:XB-GENE-6252069"/>
<dbReference type="CTD" id="496390"/>
<dbReference type="Xenbase" id="XB-GENE-6252069">
    <property type="gene designation" value="rtn1.L"/>
</dbReference>
<dbReference type="OrthoDB" id="567788at2759"/>
<dbReference type="Proteomes" id="UP000186698">
    <property type="component" value="Chromosome 8L"/>
</dbReference>
<dbReference type="Bgee" id="496390">
    <property type="expression patterns" value="Expressed in brain and 15 other cell types or tissues"/>
</dbReference>
<dbReference type="GO" id="GO:0005789">
    <property type="term" value="C:endoplasmic reticulum membrane"/>
    <property type="evidence" value="ECO:0000314"/>
    <property type="project" value="UniProtKB"/>
</dbReference>
<dbReference type="GO" id="GO:0043005">
    <property type="term" value="C:neuron projection"/>
    <property type="evidence" value="ECO:0007669"/>
    <property type="project" value="TreeGrafter"/>
</dbReference>
<dbReference type="GO" id="GO:0005634">
    <property type="term" value="C:nucleus"/>
    <property type="evidence" value="ECO:0000314"/>
    <property type="project" value="UniProtKB"/>
</dbReference>
<dbReference type="GO" id="GO:0014069">
    <property type="term" value="C:postsynaptic density"/>
    <property type="evidence" value="ECO:0007669"/>
    <property type="project" value="TreeGrafter"/>
</dbReference>
<dbReference type="GO" id="GO:0007420">
    <property type="term" value="P:brain development"/>
    <property type="evidence" value="ECO:0007669"/>
    <property type="project" value="TreeGrafter"/>
</dbReference>
<dbReference type="GO" id="GO:0071787">
    <property type="term" value="P:endoplasmic reticulum tubular network formation"/>
    <property type="evidence" value="ECO:0007669"/>
    <property type="project" value="TreeGrafter"/>
</dbReference>
<dbReference type="GO" id="GO:0030182">
    <property type="term" value="P:neuron differentiation"/>
    <property type="evidence" value="ECO:0007669"/>
    <property type="project" value="TreeGrafter"/>
</dbReference>
<dbReference type="FunFam" id="1.20.5.2480:FF:000001">
    <property type="entry name" value="Reticulon"/>
    <property type="match status" value="1"/>
</dbReference>
<dbReference type="Gene3D" id="1.20.5.2480">
    <property type="match status" value="1"/>
</dbReference>
<dbReference type="InterPro" id="IPR003388">
    <property type="entry name" value="Reticulon"/>
</dbReference>
<dbReference type="InterPro" id="IPR046964">
    <property type="entry name" value="RTN1-4"/>
</dbReference>
<dbReference type="PANTHER" id="PTHR45799:SF5">
    <property type="entry name" value="RETICULON-1"/>
    <property type="match status" value="1"/>
</dbReference>
<dbReference type="PANTHER" id="PTHR45799">
    <property type="entry name" value="RETICULON-LIKE PROTEIN"/>
    <property type="match status" value="1"/>
</dbReference>
<dbReference type="Pfam" id="PF02453">
    <property type="entry name" value="Reticulon"/>
    <property type="match status" value="1"/>
</dbReference>
<dbReference type="PROSITE" id="PS50845">
    <property type="entry name" value="RETICULON"/>
    <property type="match status" value="1"/>
</dbReference>
<gene>
    <name type="primary">rtn1-a</name>
</gene>
<keyword id="KW-0256">Endoplasmic reticulum</keyword>
<keyword id="KW-0472">Membrane</keyword>
<keyword id="KW-0539">Nucleus</keyword>
<keyword id="KW-1185">Reference proteome</keyword>
<keyword id="KW-0812">Transmembrane</keyword>
<keyword id="KW-1133">Transmembrane helix</keyword>
<evidence type="ECO:0000250" key="1">
    <source>
        <dbReference type="UniProtKB" id="Q16799"/>
    </source>
</evidence>
<evidence type="ECO:0000255" key="2"/>
<evidence type="ECO:0000255" key="3">
    <source>
        <dbReference type="PROSITE-ProRule" id="PRU00170"/>
    </source>
</evidence>
<evidence type="ECO:0000269" key="4">
    <source>
    </source>
</evidence>
<evidence type="ECO:0000305" key="5"/>
<evidence type="ECO:0000312" key="6">
    <source>
        <dbReference type="EMBL" id="AAO60242.1"/>
    </source>
</evidence>
<evidence type="ECO:0000312" key="7">
    <source>
        <dbReference type="EMBL" id="DAA02070.1"/>
    </source>
</evidence>
<name>RTN1A_XENLA</name>